<proteinExistence type="inferred from homology"/>
<keyword id="KW-0067">ATP-binding</keyword>
<keyword id="KW-0963">Cytoplasm</keyword>
<keyword id="KW-0418">Kinase</keyword>
<keyword id="KW-0545">Nucleotide biosynthesis</keyword>
<keyword id="KW-0547">Nucleotide-binding</keyword>
<keyword id="KW-1185">Reference proteome</keyword>
<keyword id="KW-0808">Transferase</keyword>
<accession>Q7VRB6</accession>
<dbReference type="EC" id="2.7.4.3" evidence="1"/>
<dbReference type="EMBL" id="BX248583">
    <property type="protein sequence ID" value="CAD83373.1"/>
    <property type="molecule type" value="Genomic_DNA"/>
</dbReference>
<dbReference type="SMR" id="Q7VRB6"/>
<dbReference type="STRING" id="203907.Bfl302"/>
<dbReference type="KEGG" id="bfl:Bfl302"/>
<dbReference type="eggNOG" id="COG0563">
    <property type="taxonomic scope" value="Bacteria"/>
</dbReference>
<dbReference type="HOGENOM" id="CLU_032354_1_2_6"/>
<dbReference type="OrthoDB" id="9805030at2"/>
<dbReference type="UniPathway" id="UPA00588">
    <property type="reaction ID" value="UER00649"/>
</dbReference>
<dbReference type="Proteomes" id="UP000002192">
    <property type="component" value="Chromosome"/>
</dbReference>
<dbReference type="GO" id="GO:0005737">
    <property type="term" value="C:cytoplasm"/>
    <property type="evidence" value="ECO:0007669"/>
    <property type="project" value="UniProtKB-SubCell"/>
</dbReference>
<dbReference type="GO" id="GO:0004017">
    <property type="term" value="F:adenylate kinase activity"/>
    <property type="evidence" value="ECO:0007669"/>
    <property type="project" value="UniProtKB-UniRule"/>
</dbReference>
<dbReference type="GO" id="GO:0005524">
    <property type="term" value="F:ATP binding"/>
    <property type="evidence" value="ECO:0007669"/>
    <property type="project" value="UniProtKB-UniRule"/>
</dbReference>
<dbReference type="GO" id="GO:0044209">
    <property type="term" value="P:AMP salvage"/>
    <property type="evidence" value="ECO:0007669"/>
    <property type="project" value="UniProtKB-UniRule"/>
</dbReference>
<dbReference type="CDD" id="cd01428">
    <property type="entry name" value="ADK"/>
    <property type="match status" value="1"/>
</dbReference>
<dbReference type="FunFam" id="3.40.50.300:FF:000106">
    <property type="entry name" value="Adenylate kinase mitochondrial"/>
    <property type="match status" value="1"/>
</dbReference>
<dbReference type="Gene3D" id="3.40.50.300">
    <property type="entry name" value="P-loop containing nucleotide triphosphate hydrolases"/>
    <property type="match status" value="1"/>
</dbReference>
<dbReference type="HAMAP" id="MF_00235">
    <property type="entry name" value="Adenylate_kinase_Adk"/>
    <property type="match status" value="1"/>
</dbReference>
<dbReference type="InterPro" id="IPR006259">
    <property type="entry name" value="Adenyl_kin_sub"/>
</dbReference>
<dbReference type="InterPro" id="IPR000850">
    <property type="entry name" value="Adenylat/UMP-CMP_kin"/>
</dbReference>
<dbReference type="InterPro" id="IPR033690">
    <property type="entry name" value="Adenylat_kinase_CS"/>
</dbReference>
<dbReference type="InterPro" id="IPR007862">
    <property type="entry name" value="Adenylate_kinase_lid-dom"/>
</dbReference>
<dbReference type="InterPro" id="IPR027417">
    <property type="entry name" value="P-loop_NTPase"/>
</dbReference>
<dbReference type="NCBIfam" id="TIGR01351">
    <property type="entry name" value="adk"/>
    <property type="match status" value="1"/>
</dbReference>
<dbReference type="PANTHER" id="PTHR23359">
    <property type="entry name" value="NUCLEOTIDE KINASE"/>
    <property type="match status" value="1"/>
</dbReference>
<dbReference type="Pfam" id="PF00406">
    <property type="entry name" value="ADK"/>
    <property type="match status" value="1"/>
</dbReference>
<dbReference type="Pfam" id="PF05191">
    <property type="entry name" value="ADK_lid"/>
    <property type="match status" value="1"/>
</dbReference>
<dbReference type="PRINTS" id="PR00094">
    <property type="entry name" value="ADENYLTKNASE"/>
</dbReference>
<dbReference type="SUPFAM" id="SSF52540">
    <property type="entry name" value="P-loop containing nucleoside triphosphate hydrolases"/>
    <property type="match status" value="1"/>
</dbReference>
<dbReference type="PROSITE" id="PS00113">
    <property type="entry name" value="ADENYLATE_KINASE"/>
    <property type="match status" value="1"/>
</dbReference>
<protein>
    <recommendedName>
        <fullName evidence="1">Adenylate kinase</fullName>
        <shortName evidence="1">AK</shortName>
        <ecNumber evidence="1">2.7.4.3</ecNumber>
    </recommendedName>
    <alternativeName>
        <fullName evidence="1">ATP-AMP transphosphorylase</fullName>
    </alternativeName>
    <alternativeName>
        <fullName evidence="1">ATP:AMP phosphotransferase</fullName>
    </alternativeName>
    <alternativeName>
        <fullName evidence="1">Adenylate monophosphate kinase</fullName>
    </alternativeName>
</protein>
<reference key="1">
    <citation type="journal article" date="2003" name="Proc. Natl. Acad. Sci. U.S.A.">
        <title>The genome sequence of Blochmannia floridanus: comparative analysis of reduced genomes.</title>
        <authorList>
            <person name="Gil R."/>
            <person name="Silva F.J."/>
            <person name="Zientz E."/>
            <person name="Delmotte F."/>
            <person name="Gonzalez-Candelas F."/>
            <person name="Latorre A."/>
            <person name="Rausell C."/>
            <person name="Kamerbeek J."/>
            <person name="Gadau J."/>
            <person name="Hoelldobler B."/>
            <person name="van Ham R.C.H.J."/>
            <person name="Gross R."/>
            <person name="Moya A."/>
        </authorList>
    </citation>
    <scope>NUCLEOTIDE SEQUENCE [LARGE SCALE GENOMIC DNA]</scope>
</reference>
<gene>
    <name evidence="1" type="primary">adk</name>
    <name type="ordered locus">Bfl302</name>
</gene>
<sequence>MYNIIFLGPPGSGKGTQAHLISTKYGISNISAGEILKHALSVTKFHFNFNTDNMLNQINSGNLVDDELIIPLIIKRIRQDDCKKGFILDGFPRTIGQAIAIEQNKIAIDFVIEFNISDSAIINRIVGRQVHIKSGRTYHIKFNPPKLDGIDDITGEKLVIRADDNAQVILQRLNQYRKYTIFLSDYYQKQSQQGNMRYFIINGNQEITKIYKELINIFNFHIFKMN</sequence>
<evidence type="ECO:0000255" key="1">
    <source>
        <dbReference type="HAMAP-Rule" id="MF_00235"/>
    </source>
</evidence>
<name>KAD_BLOFL</name>
<feature type="chain" id="PRO_0000158749" description="Adenylate kinase">
    <location>
        <begin position="1"/>
        <end position="226"/>
    </location>
</feature>
<feature type="region of interest" description="NMP" evidence="1">
    <location>
        <begin position="31"/>
        <end position="64"/>
    </location>
</feature>
<feature type="region of interest" description="LID">
    <location>
        <begin position="127"/>
        <end position="164"/>
    </location>
</feature>
<feature type="binding site" evidence="1">
    <location>
        <begin position="11"/>
        <end position="16"/>
    </location>
    <ligand>
        <name>ATP</name>
        <dbReference type="ChEBI" id="CHEBI:30616"/>
    </ligand>
</feature>
<feature type="binding site" evidence="1">
    <location>
        <begin position="62"/>
        <end position="64"/>
    </location>
    <ligand>
        <name>AMP</name>
        <dbReference type="ChEBI" id="CHEBI:456215"/>
    </ligand>
</feature>
<feature type="binding site" evidence="1">
    <location>
        <begin position="90"/>
        <end position="93"/>
    </location>
    <ligand>
        <name>AMP</name>
        <dbReference type="ChEBI" id="CHEBI:456215"/>
    </ligand>
</feature>
<feature type="binding site" evidence="1">
    <location>
        <position position="97"/>
    </location>
    <ligand>
        <name>AMP</name>
        <dbReference type="ChEBI" id="CHEBI:456215"/>
    </ligand>
</feature>
<feature type="binding site" evidence="1">
    <location>
        <position position="128"/>
    </location>
    <ligand>
        <name>ATP</name>
        <dbReference type="ChEBI" id="CHEBI:30616"/>
    </ligand>
</feature>
<feature type="binding site" evidence="1">
    <location>
        <begin position="137"/>
        <end position="138"/>
    </location>
    <ligand>
        <name>ATP</name>
        <dbReference type="ChEBI" id="CHEBI:30616"/>
    </ligand>
</feature>
<feature type="binding site" evidence="1">
    <location>
        <position position="161"/>
    </location>
    <ligand>
        <name>AMP</name>
        <dbReference type="ChEBI" id="CHEBI:456215"/>
    </ligand>
</feature>
<feature type="binding site" evidence="1">
    <location>
        <position position="172"/>
    </location>
    <ligand>
        <name>AMP</name>
        <dbReference type="ChEBI" id="CHEBI:456215"/>
    </ligand>
</feature>
<feature type="binding site" evidence="1">
    <location>
        <position position="205"/>
    </location>
    <ligand>
        <name>ATP</name>
        <dbReference type="ChEBI" id="CHEBI:30616"/>
    </ligand>
</feature>
<comment type="function">
    <text evidence="1">Catalyzes the reversible transfer of the terminal phosphate group between ATP and AMP. Plays an important role in cellular energy homeostasis and in adenine nucleotide metabolism.</text>
</comment>
<comment type="catalytic activity">
    <reaction evidence="1">
        <text>AMP + ATP = 2 ADP</text>
        <dbReference type="Rhea" id="RHEA:12973"/>
        <dbReference type="ChEBI" id="CHEBI:30616"/>
        <dbReference type="ChEBI" id="CHEBI:456215"/>
        <dbReference type="ChEBI" id="CHEBI:456216"/>
        <dbReference type="EC" id="2.7.4.3"/>
    </reaction>
</comment>
<comment type="pathway">
    <text evidence="1">Purine metabolism; AMP biosynthesis via salvage pathway; AMP from ADP: step 1/1.</text>
</comment>
<comment type="subunit">
    <text evidence="1">Monomer.</text>
</comment>
<comment type="subcellular location">
    <subcellularLocation>
        <location evidence="1">Cytoplasm</location>
    </subcellularLocation>
</comment>
<comment type="domain">
    <text evidence="1">Consists of three domains, a large central CORE domain and two small peripheral domains, NMPbind and LID, which undergo movements during catalysis. The LID domain closes over the site of phosphoryl transfer upon ATP binding. Assembling and dissambling the active center during each catalytic cycle provides an effective means to prevent ATP hydrolysis.</text>
</comment>
<comment type="similarity">
    <text evidence="1">Belongs to the adenylate kinase family.</text>
</comment>
<organism>
    <name type="scientific">Blochmanniella floridana</name>
    <dbReference type="NCBI Taxonomy" id="203907"/>
    <lineage>
        <taxon>Bacteria</taxon>
        <taxon>Pseudomonadati</taxon>
        <taxon>Pseudomonadota</taxon>
        <taxon>Gammaproteobacteria</taxon>
        <taxon>Enterobacterales</taxon>
        <taxon>Enterobacteriaceae</taxon>
        <taxon>ant endosymbionts</taxon>
        <taxon>Candidatus Blochmanniella</taxon>
    </lineage>
</organism>